<feature type="chain" id="PRO_1000206123" description="Transcriptional repressor NrdR">
    <location>
        <begin position="1"/>
        <end position="164"/>
    </location>
</feature>
<feature type="domain" description="ATP-cone" evidence="1">
    <location>
        <begin position="46"/>
        <end position="136"/>
    </location>
</feature>
<feature type="zinc finger region" evidence="1">
    <location>
        <begin position="3"/>
        <end position="34"/>
    </location>
</feature>
<accession>C5CA18</accession>
<keyword id="KW-0067">ATP-binding</keyword>
<keyword id="KW-0238">DNA-binding</keyword>
<keyword id="KW-0479">Metal-binding</keyword>
<keyword id="KW-0547">Nucleotide-binding</keyword>
<keyword id="KW-1185">Reference proteome</keyword>
<keyword id="KW-0678">Repressor</keyword>
<keyword id="KW-0804">Transcription</keyword>
<keyword id="KW-0805">Transcription regulation</keyword>
<keyword id="KW-0862">Zinc</keyword>
<keyword id="KW-0863">Zinc-finger</keyword>
<proteinExistence type="inferred from homology"/>
<reference key="1">
    <citation type="journal article" date="2010" name="J. Bacteriol.">
        <title>Genome sequence of the Fleming strain of Micrococcus luteus, a simple free-living actinobacterium.</title>
        <authorList>
            <person name="Young M."/>
            <person name="Artsatbanov V."/>
            <person name="Beller H.R."/>
            <person name="Chandra G."/>
            <person name="Chater K.F."/>
            <person name="Dover L.G."/>
            <person name="Goh E.B."/>
            <person name="Kahan T."/>
            <person name="Kaprelyants A.S."/>
            <person name="Kyrpides N."/>
            <person name="Lapidus A."/>
            <person name="Lowry S.R."/>
            <person name="Lykidis A."/>
            <person name="Mahillon J."/>
            <person name="Markowitz V."/>
            <person name="Mavromatis K."/>
            <person name="Mukamolova G.V."/>
            <person name="Oren A."/>
            <person name="Rokem J.S."/>
            <person name="Smith M.C."/>
            <person name="Young D.I."/>
            <person name="Greenblatt C.L."/>
        </authorList>
    </citation>
    <scope>NUCLEOTIDE SEQUENCE [LARGE SCALE GENOMIC DNA]</scope>
    <source>
        <strain>ATCC 4698 / DSM 20030 / JCM 1464 / CCM 169 / CCUG 5858 / IAM 1056 / NBRC 3333 / NCIMB 9278 / NCTC 2665 / VKM Ac-2230</strain>
    </source>
</reference>
<protein>
    <recommendedName>
        <fullName evidence="1">Transcriptional repressor NrdR</fullName>
    </recommendedName>
</protein>
<sequence>MHCPFCRHEDSRVVDSRSLDDGSAIRRRRQCQACGKRFTTMETTALTVVKRSGVAEPFDRSKVINGVRKACQGRPVTSDDLAMLAQEVEETVRATGNAEVDAHDVGLAILDPLRRLDQVAFLRFASVYRDFESLDDFEEAIAELRAGDGDDRGRPAVQPRLFTR</sequence>
<comment type="function">
    <text evidence="1">Negatively regulates transcription of bacterial ribonucleotide reductase nrd genes and operons by binding to NrdR-boxes.</text>
</comment>
<comment type="cofactor">
    <cofactor evidence="1">
        <name>Zn(2+)</name>
        <dbReference type="ChEBI" id="CHEBI:29105"/>
    </cofactor>
    <text evidence="1">Binds 1 zinc ion.</text>
</comment>
<comment type="similarity">
    <text evidence="1">Belongs to the NrdR family.</text>
</comment>
<gene>
    <name evidence="1" type="primary">nrdR</name>
    <name type="ordered locus">Mlut_13480</name>
</gene>
<organism>
    <name type="scientific">Micrococcus luteus (strain ATCC 4698 / DSM 20030 / JCM 1464 / CCM 169 / CCUG 5858 / IAM 1056 / NBRC 3333 / NCIMB 9278 / NCTC 2665 / VKM Ac-2230)</name>
    <name type="common">Micrococcus lysodeikticus</name>
    <dbReference type="NCBI Taxonomy" id="465515"/>
    <lineage>
        <taxon>Bacteria</taxon>
        <taxon>Bacillati</taxon>
        <taxon>Actinomycetota</taxon>
        <taxon>Actinomycetes</taxon>
        <taxon>Micrococcales</taxon>
        <taxon>Micrococcaceae</taxon>
        <taxon>Micrococcus</taxon>
    </lineage>
</organism>
<evidence type="ECO:0000255" key="1">
    <source>
        <dbReference type="HAMAP-Rule" id="MF_00440"/>
    </source>
</evidence>
<dbReference type="EMBL" id="CP001628">
    <property type="protein sequence ID" value="ACS30853.1"/>
    <property type="molecule type" value="Genomic_DNA"/>
</dbReference>
<dbReference type="RefSeq" id="WP_002855838.1">
    <property type="nucleotide sequence ID" value="NZ_WBMF01000049.1"/>
</dbReference>
<dbReference type="SMR" id="C5CA18"/>
<dbReference type="STRING" id="465515.Mlut_13480"/>
<dbReference type="EnsemblBacteria" id="ACS30853">
    <property type="protein sequence ID" value="ACS30853"/>
    <property type="gene ID" value="Mlut_13480"/>
</dbReference>
<dbReference type="GeneID" id="93362394"/>
<dbReference type="KEGG" id="mlu:Mlut_13480"/>
<dbReference type="eggNOG" id="COG1327">
    <property type="taxonomic scope" value="Bacteria"/>
</dbReference>
<dbReference type="HOGENOM" id="CLU_108412_1_0_11"/>
<dbReference type="Proteomes" id="UP000000738">
    <property type="component" value="Chromosome"/>
</dbReference>
<dbReference type="GO" id="GO:0005524">
    <property type="term" value="F:ATP binding"/>
    <property type="evidence" value="ECO:0007669"/>
    <property type="project" value="UniProtKB-KW"/>
</dbReference>
<dbReference type="GO" id="GO:0003677">
    <property type="term" value="F:DNA binding"/>
    <property type="evidence" value="ECO:0007669"/>
    <property type="project" value="UniProtKB-KW"/>
</dbReference>
<dbReference type="GO" id="GO:0008270">
    <property type="term" value="F:zinc ion binding"/>
    <property type="evidence" value="ECO:0007669"/>
    <property type="project" value="UniProtKB-UniRule"/>
</dbReference>
<dbReference type="GO" id="GO:0045892">
    <property type="term" value="P:negative regulation of DNA-templated transcription"/>
    <property type="evidence" value="ECO:0007669"/>
    <property type="project" value="UniProtKB-UniRule"/>
</dbReference>
<dbReference type="HAMAP" id="MF_00440">
    <property type="entry name" value="NrdR"/>
    <property type="match status" value="1"/>
</dbReference>
<dbReference type="InterPro" id="IPR005144">
    <property type="entry name" value="ATP-cone_dom"/>
</dbReference>
<dbReference type="InterPro" id="IPR055173">
    <property type="entry name" value="NrdR-like_N"/>
</dbReference>
<dbReference type="InterPro" id="IPR003796">
    <property type="entry name" value="RNR_NrdR-like"/>
</dbReference>
<dbReference type="NCBIfam" id="TIGR00244">
    <property type="entry name" value="transcriptional regulator NrdR"/>
    <property type="match status" value="1"/>
</dbReference>
<dbReference type="PANTHER" id="PTHR30455">
    <property type="entry name" value="TRANSCRIPTIONAL REPRESSOR NRDR"/>
    <property type="match status" value="1"/>
</dbReference>
<dbReference type="PANTHER" id="PTHR30455:SF2">
    <property type="entry name" value="TRANSCRIPTIONAL REPRESSOR NRDR"/>
    <property type="match status" value="1"/>
</dbReference>
<dbReference type="Pfam" id="PF03477">
    <property type="entry name" value="ATP-cone"/>
    <property type="match status" value="1"/>
</dbReference>
<dbReference type="Pfam" id="PF22811">
    <property type="entry name" value="Zn_ribbon_NrdR"/>
    <property type="match status" value="1"/>
</dbReference>
<dbReference type="PROSITE" id="PS51161">
    <property type="entry name" value="ATP_CONE"/>
    <property type="match status" value="1"/>
</dbReference>
<name>NRDR_MICLC</name>